<proteinExistence type="evidence at transcript level"/>
<comment type="function">
    <text>Hydrolysis of the deoxyribose N-glycosidic bond to excise 3-methyladenine, and 7-methylguanine from the damaged DNA polymer formed by alkylation lesions.</text>
</comment>
<comment type="catalytic activity">
    <reaction>
        <text>Hydrolysis of alkylated DNA, releasing 3-methyladenine, 3-methylguanine, 7-methylguanine and 7-methyladenine.</text>
        <dbReference type="EC" id="3.2.2.21"/>
    </reaction>
</comment>
<comment type="activity regulation">
    <text evidence="1">Binding to SSBP1 in mitochondria inhibits glycosylase activity in the context of a single-stranded DNA (ssDNA), but not a double-stranded DNA (dsDNA) substrates.</text>
</comment>
<comment type="subunit">
    <text evidence="1">Binds MBD1. Binds SSBP1.</text>
</comment>
<comment type="subcellular location">
    <subcellularLocation>
        <location evidence="1">Cytoplasm</location>
    </subcellularLocation>
    <subcellularLocation>
        <location evidence="1">Mitochondrion matrix</location>
        <location evidence="1">Mitochondrion nucleoid</location>
    </subcellularLocation>
    <subcellularLocation>
        <location evidence="1">Nucleus</location>
    </subcellularLocation>
</comment>
<comment type="similarity">
    <text evidence="4">Belongs to the DNA glycosylase MPG family.</text>
</comment>
<organism>
    <name type="scientific">Mus musculus</name>
    <name type="common">Mouse</name>
    <dbReference type="NCBI Taxonomy" id="10090"/>
    <lineage>
        <taxon>Eukaryota</taxon>
        <taxon>Metazoa</taxon>
        <taxon>Chordata</taxon>
        <taxon>Craniata</taxon>
        <taxon>Vertebrata</taxon>
        <taxon>Euteleostomi</taxon>
        <taxon>Mammalia</taxon>
        <taxon>Eutheria</taxon>
        <taxon>Euarchontoglires</taxon>
        <taxon>Glires</taxon>
        <taxon>Rodentia</taxon>
        <taxon>Myomorpha</taxon>
        <taxon>Muroidea</taxon>
        <taxon>Muridae</taxon>
        <taxon>Murinae</taxon>
        <taxon>Mus</taxon>
        <taxon>Mus</taxon>
    </lineage>
</organism>
<gene>
    <name type="primary">Mpg</name>
    <name type="synonym">Mid1</name>
</gene>
<protein>
    <recommendedName>
        <fullName>DNA-3-methyladenine glycosylase</fullName>
        <ecNumber>3.2.2.21</ecNumber>
    </recommendedName>
    <alternativeName>
        <fullName>3-alkyladenine DNA glycosylase</fullName>
    </alternativeName>
    <alternativeName>
        <fullName>3-methyladenine DNA glycosidase</fullName>
    </alternativeName>
    <alternativeName>
        <fullName>ADPG</fullName>
    </alternativeName>
    <alternativeName>
        <fullName>N-methylpurine-DNA glycosylase</fullName>
    </alternativeName>
</protein>
<keyword id="KW-0963">Cytoplasm</keyword>
<keyword id="KW-0227">DNA damage</keyword>
<keyword id="KW-0234">DNA repair</keyword>
<keyword id="KW-0378">Hydrolase</keyword>
<keyword id="KW-0496">Mitochondrion</keyword>
<keyword id="KW-1135">Mitochondrion nucleoid</keyword>
<keyword id="KW-0539">Nucleus</keyword>
<keyword id="KW-0597">Phosphoprotein</keyword>
<keyword id="KW-1185">Reference proteome</keyword>
<reference key="1">
    <citation type="journal article" date="1995" name="DNA Cell Biol.">
        <title>Structural organization of the mouse DNA repair gene, N-methylpurine-DNA glycosylase.</title>
        <authorList>
            <person name="Tatsuka M."/>
            <person name="Ibeanu G.C."/>
            <person name="Izumi T."/>
            <person name="Narayan S."/>
            <person name="Ramana C.V."/>
            <person name="Kim N.K."/>
            <person name="Kang W."/>
            <person name="Roy G."/>
            <person name="Mitra S."/>
        </authorList>
    </citation>
    <scope>NUCLEOTIDE SEQUENCE [GENOMIC DNA]</scope>
    <source>
        <strain>FEB/N</strain>
        <tissue>Spleen</tissue>
    </source>
</reference>
<reference key="2">
    <citation type="journal article" date="1993" name="Carcinogenesis">
        <title>Cloning and characterization of a mouse 3-methyladenine/7-methyl-guanine/3-methylguanine DNA glycosylase cDNA whose gene maps to chromosome 11.</title>
        <authorList>
            <person name="Engelward B.P."/>
            <person name="Boosalis M.S."/>
            <person name="Chen B.J."/>
            <person name="Deng Z."/>
            <person name="Siciliano M.J."/>
            <person name="Samson L.D."/>
        </authorList>
    </citation>
    <scope>NUCLEOTIDE SEQUENCE [MRNA]</scope>
</reference>
<reference key="3">
    <citation type="journal article" date="1995" name="Mamm. Genome">
        <title>Structure of the mouse 3-methyladenine DNA glycosylase gene and exact localization upstream of the alpha-globin gene cluster on chromosome 11.</title>
        <authorList>
            <person name="Kielman M.F."/>
            <person name="Smits R."/>
            <person name="Bernini L.F."/>
        </authorList>
    </citation>
    <scope>NUCLEOTIDE SEQUENCE [GENOMIC DNA]</scope>
</reference>
<reference key="4">
    <citation type="journal article" date="2009" name="PLoS Biol.">
        <title>Lineage-specific biology revealed by a finished genome assembly of the mouse.</title>
        <authorList>
            <person name="Church D.M."/>
            <person name="Goodstadt L."/>
            <person name="Hillier L.W."/>
            <person name="Zody M.C."/>
            <person name="Goldstein S."/>
            <person name="She X."/>
            <person name="Bult C.J."/>
            <person name="Agarwala R."/>
            <person name="Cherry J.L."/>
            <person name="DiCuccio M."/>
            <person name="Hlavina W."/>
            <person name="Kapustin Y."/>
            <person name="Meric P."/>
            <person name="Maglott D."/>
            <person name="Birtle Z."/>
            <person name="Marques A.C."/>
            <person name="Graves T."/>
            <person name="Zhou S."/>
            <person name="Teague B."/>
            <person name="Potamousis K."/>
            <person name="Churas C."/>
            <person name="Place M."/>
            <person name="Herschleb J."/>
            <person name="Runnheim R."/>
            <person name="Forrest D."/>
            <person name="Amos-Landgraf J."/>
            <person name="Schwartz D.C."/>
            <person name="Cheng Z."/>
            <person name="Lindblad-Toh K."/>
            <person name="Eichler E.E."/>
            <person name="Ponting C.P."/>
        </authorList>
    </citation>
    <scope>NUCLEOTIDE SEQUENCE [LARGE SCALE GENOMIC DNA]</scope>
    <source>
        <strain>C57BL/6J</strain>
    </source>
</reference>
<reference key="5">
    <citation type="journal article" date="2004" name="Genome Res.">
        <title>The status, quality, and expansion of the NIH full-length cDNA project: the Mammalian Gene Collection (MGC).</title>
        <authorList>
            <consortium name="The MGC Project Team"/>
        </authorList>
    </citation>
    <scope>NUCLEOTIDE SEQUENCE [LARGE SCALE MRNA]</scope>
    <source>
        <tissue>Mammary tumor</tissue>
    </source>
</reference>
<reference key="6">
    <citation type="journal article" date="1993" name="Mamm. Genome">
        <title>Homology of a 130-kb region enclosing the alpha-globin gene cluster, the alpha-locus controlling region, and two non-globin genes in human and mouse.</title>
        <authorList>
            <person name="Kielman M.F."/>
            <person name="Smits R."/>
            <person name="Devi T.S."/>
            <person name="Fodde R."/>
            <person name="Bernini L.F."/>
        </authorList>
    </citation>
    <scope>NUCLEOTIDE SEQUENCE [MRNA] OF 250-324</scope>
</reference>
<feature type="chain" id="PRO_0000100066" description="DNA-3-methyladenine glycosylase">
    <location>
        <begin position="1"/>
        <end position="333"/>
    </location>
</feature>
<feature type="region of interest" description="Disordered" evidence="3">
    <location>
        <begin position="1"/>
        <end position="42"/>
    </location>
</feature>
<feature type="compositionally biased region" description="Low complexity" evidence="3">
    <location>
        <begin position="1"/>
        <end position="14"/>
    </location>
</feature>
<feature type="modified residue" description="Phosphoserine" evidence="2">
    <location>
        <position position="98"/>
    </location>
</feature>
<feature type="modified residue" description="Phosphoserine" evidence="2">
    <location>
        <position position="272"/>
    </location>
</feature>
<feature type="sequence conflict" description="In Ref. 1; CAA52615, 2; AAA19487 and 5; AAH14754." evidence="4" ref="1 2 5">
    <original>A</original>
    <variation>S</variation>
    <location>
        <position position="14"/>
    </location>
</feature>
<feature type="sequence conflict" description="In Ref. 6; AAA02577." evidence="4" ref="6">
    <original>PQQTAC</original>
    <variation>LANSLL</variation>
    <location>
        <begin position="319"/>
        <end position="324"/>
    </location>
</feature>
<evidence type="ECO:0000250" key="1"/>
<evidence type="ECO:0000250" key="2">
    <source>
        <dbReference type="UniProtKB" id="P29372"/>
    </source>
</evidence>
<evidence type="ECO:0000256" key="3">
    <source>
        <dbReference type="SAM" id="MobiDB-lite"/>
    </source>
</evidence>
<evidence type="ECO:0000305" key="4"/>
<name>3MG_MOUSE</name>
<dbReference type="EC" id="3.2.2.21"/>
<dbReference type="EMBL" id="X74509">
    <property type="protein sequence ID" value="CAA52615.1"/>
    <property type="molecule type" value="Genomic_DNA"/>
</dbReference>
<dbReference type="EMBL" id="X75038">
    <property type="protein sequence ID" value="CAA52615.1"/>
    <property type="status" value="JOINED"/>
    <property type="molecule type" value="Genomic_DNA"/>
</dbReference>
<dbReference type="EMBL" id="X75039">
    <property type="protein sequence ID" value="CAA52615.1"/>
    <property type="status" value="JOINED"/>
    <property type="molecule type" value="Genomic_DNA"/>
</dbReference>
<dbReference type="EMBL" id="X75040">
    <property type="protein sequence ID" value="CAA52615.1"/>
    <property type="status" value="JOINED"/>
    <property type="molecule type" value="Genomic_DNA"/>
</dbReference>
<dbReference type="EMBL" id="U10420">
    <property type="protein sequence ID" value="AAA19487.1"/>
    <property type="molecule type" value="mRNA"/>
</dbReference>
<dbReference type="EMBL" id="S81162">
    <property type="status" value="NOT_ANNOTATED_CDS"/>
    <property type="molecule type" value="Genomic_DNA"/>
</dbReference>
<dbReference type="EMBL" id="S81120">
    <property type="status" value="NOT_ANNOTATED_CDS"/>
    <property type="molecule type" value="Genomic_DNA"/>
</dbReference>
<dbReference type="EMBL" id="S81133">
    <property type="status" value="NOT_ANNOTATED_CDS"/>
    <property type="molecule type" value="Genomic_DNA"/>
</dbReference>
<dbReference type="EMBL" id="S81134">
    <property type="status" value="NOT_ANNOTATED_CDS"/>
    <property type="molecule type" value="Genomic_DNA"/>
</dbReference>
<dbReference type="EMBL" id="AL929446">
    <property type="status" value="NOT_ANNOTATED_CDS"/>
    <property type="molecule type" value="Genomic_DNA"/>
</dbReference>
<dbReference type="EMBL" id="BC014754">
    <property type="protein sequence ID" value="AAH14754.1"/>
    <property type="molecule type" value="mRNA"/>
</dbReference>
<dbReference type="EMBL" id="M99625">
    <property type="protein sequence ID" value="AAA02577.1"/>
    <property type="molecule type" value="mRNA"/>
</dbReference>
<dbReference type="CCDS" id="CCDS24520.1"/>
<dbReference type="PIR" id="A49003">
    <property type="entry name" value="A49003"/>
</dbReference>
<dbReference type="PIR" id="I62129">
    <property type="entry name" value="I62129"/>
</dbReference>
<dbReference type="RefSeq" id="NP_034952.2">
    <property type="nucleotide sequence ID" value="NM_010822.4"/>
</dbReference>
<dbReference type="SMR" id="Q04841"/>
<dbReference type="FunCoup" id="Q04841">
    <property type="interactions" value="914"/>
</dbReference>
<dbReference type="STRING" id="10090.ENSMUSP00000020528"/>
<dbReference type="GlyGen" id="Q04841">
    <property type="glycosylation" value="1 site, 1 O-linked glycan (1 site)"/>
</dbReference>
<dbReference type="iPTMnet" id="Q04841"/>
<dbReference type="PhosphoSitePlus" id="Q04841"/>
<dbReference type="PaxDb" id="10090-ENSMUSP00000020528"/>
<dbReference type="PeptideAtlas" id="Q04841"/>
<dbReference type="ProteomicsDB" id="285945"/>
<dbReference type="Pumba" id="Q04841"/>
<dbReference type="Antibodypedia" id="1865">
    <property type="antibodies" value="420 antibodies from 35 providers"/>
</dbReference>
<dbReference type="DNASU" id="268395"/>
<dbReference type="Ensembl" id="ENSMUST00000020528.14">
    <property type="protein sequence ID" value="ENSMUSP00000020528.8"/>
    <property type="gene ID" value="ENSMUSG00000020287.16"/>
</dbReference>
<dbReference type="GeneID" id="268395"/>
<dbReference type="KEGG" id="mmu:268395"/>
<dbReference type="UCSC" id="uc007ijd.2">
    <property type="organism name" value="mouse"/>
</dbReference>
<dbReference type="AGR" id="MGI:97073"/>
<dbReference type="CTD" id="4350"/>
<dbReference type="MGI" id="MGI:97073">
    <property type="gene designation" value="Mpg"/>
</dbReference>
<dbReference type="VEuPathDB" id="HostDB:ENSMUSG00000020287"/>
<dbReference type="eggNOG" id="KOG4486">
    <property type="taxonomic scope" value="Eukaryota"/>
</dbReference>
<dbReference type="GeneTree" id="ENSGT00390000009825"/>
<dbReference type="HOGENOM" id="CLU_060471_0_0_1"/>
<dbReference type="InParanoid" id="Q04841"/>
<dbReference type="OMA" id="HNGRITE"/>
<dbReference type="OrthoDB" id="6353017at2759"/>
<dbReference type="PhylomeDB" id="Q04841"/>
<dbReference type="TreeFam" id="TF331768"/>
<dbReference type="Reactome" id="R-MMU-110331">
    <property type="pathway name" value="Cleavage of the damaged purine"/>
</dbReference>
<dbReference type="Reactome" id="R-MMU-110357">
    <property type="pathway name" value="Displacement of DNA glycosylase by APEX1"/>
</dbReference>
<dbReference type="BioGRID-ORCS" id="268395">
    <property type="hits" value="3 hits in 115 CRISPR screens"/>
</dbReference>
<dbReference type="PRO" id="PR:Q04841"/>
<dbReference type="Proteomes" id="UP000000589">
    <property type="component" value="Chromosome 11"/>
</dbReference>
<dbReference type="RNAct" id="Q04841">
    <property type="molecule type" value="protein"/>
</dbReference>
<dbReference type="Bgee" id="ENSMUSG00000020287">
    <property type="expression patterns" value="Expressed in parotid gland and 245 other cell types or tissues"/>
</dbReference>
<dbReference type="ExpressionAtlas" id="Q04841">
    <property type="expression patterns" value="baseline and differential"/>
</dbReference>
<dbReference type="GO" id="GO:0005829">
    <property type="term" value="C:cytosol"/>
    <property type="evidence" value="ECO:0007669"/>
    <property type="project" value="Ensembl"/>
</dbReference>
<dbReference type="GO" id="GO:0042645">
    <property type="term" value="C:mitochondrial nucleoid"/>
    <property type="evidence" value="ECO:0007669"/>
    <property type="project" value="UniProtKB-SubCell"/>
</dbReference>
<dbReference type="GO" id="GO:0005654">
    <property type="term" value="C:nucleoplasm"/>
    <property type="evidence" value="ECO:0007669"/>
    <property type="project" value="Ensembl"/>
</dbReference>
<dbReference type="GO" id="GO:0003905">
    <property type="term" value="F:alkylbase DNA N-glycosylase activity"/>
    <property type="evidence" value="ECO:0000314"/>
    <property type="project" value="MGI"/>
</dbReference>
<dbReference type="GO" id="GO:0003677">
    <property type="term" value="F:DNA binding"/>
    <property type="evidence" value="ECO:0007669"/>
    <property type="project" value="InterPro"/>
</dbReference>
<dbReference type="GO" id="GO:0006284">
    <property type="term" value="P:base-excision repair"/>
    <property type="evidence" value="ECO:0000315"/>
    <property type="project" value="MGI"/>
</dbReference>
<dbReference type="CDD" id="cd00540">
    <property type="entry name" value="AAG"/>
    <property type="match status" value="1"/>
</dbReference>
<dbReference type="FunFam" id="3.10.300.10:FF:000001">
    <property type="entry name" value="Putative 3-methyladenine DNA glycosylase"/>
    <property type="match status" value="1"/>
</dbReference>
<dbReference type="Gene3D" id="3.10.300.10">
    <property type="entry name" value="Methylpurine-DNA glycosylase (MPG)"/>
    <property type="match status" value="1"/>
</dbReference>
<dbReference type="HAMAP" id="MF_00527">
    <property type="entry name" value="3MGH"/>
    <property type="match status" value="1"/>
</dbReference>
<dbReference type="InterPro" id="IPR011034">
    <property type="entry name" value="Formyl_transferase-like_C_sf"/>
</dbReference>
<dbReference type="InterPro" id="IPR003180">
    <property type="entry name" value="MPG"/>
</dbReference>
<dbReference type="InterPro" id="IPR036995">
    <property type="entry name" value="MPG_sf"/>
</dbReference>
<dbReference type="NCBIfam" id="TIGR00567">
    <property type="entry name" value="3mg"/>
    <property type="match status" value="1"/>
</dbReference>
<dbReference type="PANTHER" id="PTHR10429">
    <property type="entry name" value="DNA-3-METHYLADENINE GLYCOSYLASE"/>
    <property type="match status" value="1"/>
</dbReference>
<dbReference type="PANTHER" id="PTHR10429:SF0">
    <property type="entry name" value="DNA-3-METHYLADENINE GLYCOSYLASE"/>
    <property type="match status" value="1"/>
</dbReference>
<dbReference type="Pfam" id="PF02245">
    <property type="entry name" value="Pur_DNA_glyco"/>
    <property type="match status" value="1"/>
</dbReference>
<dbReference type="SUPFAM" id="SSF50486">
    <property type="entry name" value="FMT C-terminal domain-like"/>
    <property type="match status" value="1"/>
</dbReference>
<sequence>MPARGGSARPGRGALKPVSVTLLPDTEQPPFLGRARRPGNARAGSLVTGYHEVGQMPAPLSRKIGQKKQRLADSEQQQTPKERLLSTPGLRRSIYFSSPEDHSGRLGPEFFDQPAVTLARAFLGQVLVRRLADGTELRGRIVETEAYLGPEDEAAHSRGGRQTPRNRGMFMKPGTLYVYLIYGMYFCLNVSSQGAGACVLLRALEPLEGLETMRQLRNSLRKSTVGRSLKDRELCSGPSKLCQALAIDKSFDQRDLAQDDAVWLEHGPLESSSPAVVVAAARIGIGHAGEWTQKPLRFYVQGSPWVSVVDRVAEQMDQPQQTACSEGLLIVQK</sequence>
<accession>Q04841</accession>
<accession>A2AVE7</accession>
<accession>Q64182</accession>